<accession>O64253</accession>
<keyword id="KW-1185">Reference proteome</keyword>
<reference key="1">
    <citation type="journal article" date="1998" name="J. Mol. Biol.">
        <title>Genome structure of mycobacteriophage D29: implications for phage evolution.</title>
        <authorList>
            <person name="Ford M.E."/>
            <person name="Sarkis G.J."/>
            <person name="Belanger A.E."/>
            <person name="Hendrix R.W."/>
            <person name="Hatfull G.F."/>
        </authorList>
    </citation>
    <scope>NUCLEOTIDE SEQUENCE [LARGE SCALE GENOMIC DNA]</scope>
</reference>
<feature type="chain" id="PRO_0000164795" description="Gene 61 protein">
    <location>
        <begin position="1"/>
        <end position="125"/>
    </location>
</feature>
<name>VG61_BPMD2</name>
<sequence length="125" mass="14029">MRRVLITGSRVWKDRTTVWDALADELHRSPYGLVVVHGGARGADDIADRWAWGMRQEGFNVTPELHRADWEWHGKKAGVLRNIEMVRAGADVCLAFPLGRSVGTRHCMREAQKAGIPVINFGDKP</sequence>
<dbReference type="EMBL" id="AF022214">
    <property type="protein sequence ID" value="AAC18503.1"/>
    <property type="molecule type" value="Genomic_DNA"/>
</dbReference>
<dbReference type="PIR" id="D72807">
    <property type="entry name" value="D72807"/>
</dbReference>
<dbReference type="RefSeq" id="NP_046878.1">
    <property type="nucleotide sequence ID" value="NC_001900.1"/>
</dbReference>
<dbReference type="SMR" id="O64253"/>
<dbReference type="GeneID" id="1261626"/>
<dbReference type="KEGG" id="vg:1261626"/>
<dbReference type="OrthoDB" id="13008at10239"/>
<dbReference type="Proteomes" id="UP000002131">
    <property type="component" value="Segment"/>
</dbReference>
<dbReference type="InterPro" id="IPR019627">
    <property type="entry name" value="YAcAr"/>
</dbReference>
<dbReference type="Pfam" id="PF10686">
    <property type="entry name" value="YAcAr"/>
    <property type="match status" value="1"/>
</dbReference>
<dbReference type="SUPFAM" id="SSF102405">
    <property type="entry name" value="MCP/YpsA-like"/>
    <property type="match status" value="1"/>
</dbReference>
<gene>
    <name type="primary">61</name>
</gene>
<organism>
    <name type="scientific">Mycobacterium phage D29</name>
    <name type="common">Mycobacteriophage D29</name>
    <dbReference type="NCBI Taxonomy" id="28369"/>
    <lineage>
        <taxon>Viruses</taxon>
        <taxon>Duplodnaviria</taxon>
        <taxon>Heunggongvirae</taxon>
        <taxon>Uroviricota</taxon>
        <taxon>Caudoviricetes</taxon>
        <taxon>Fromanvirus</taxon>
    </lineage>
</organism>
<organismHost>
    <name type="scientific">Mycobacterium</name>
    <dbReference type="NCBI Taxonomy" id="1763"/>
</organismHost>
<protein>
    <recommendedName>
        <fullName>Gene 61 protein</fullName>
    </recommendedName>
    <alternativeName>
        <fullName>Gp61</fullName>
    </alternativeName>
</protein>
<proteinExistence type="predicted"/>